<comment type="function">
    <text evidence="2">One of the essential components for the initiation of protein synthesis. Protects formylmethionyl-tRNA from spontaneous hydrolysis and promotes its binding to the 30S ribosomal subunits. Also involved in the hydrolysis of GTP during the formation of the 70S ribosomal complex.</text>
</comment>
<comment type="subcellular location">
    <subcellularLocation>
        <location evidence="2">Cytoplasm</location>
    </subcellularLocation>
</comment>
<comment type="similarity">
    <text evidence="2">Belongs to the TRAFAC class translation factor GTPase superfamily. Classic translation factor GTPase family. IF-2 subfamily.</text>
</comment>
<name>IF2_MYCSJ</name>
<keyword id="KW-0963">Cytoplasm</keyword>
<keyword id="KW-0342">GTP-binding</keyword>
<keyword id="KW-0396">Initiation factor</keyword>
<keyword id="KW-0547">Nucleotide-binding</keyword>
<keyword id="KW-0648">Protein biosynthesis</keyword>
<sequence>MAGKARVHELAKELGVTSKELLATLKEQGEFVKSASSTVEAPVARRLREKFGSKSAPAPAKSAGNGATAAPATSATPATAAAAAAPAPAPAPQAPAKPAAPKPAAPQPVAPPQPAAAAPTPPPAASAPAPAPAPSAPAPSRPGPTPGPRPGPAPKPAPRTPRVGNNPFSTQQPVDRPIPRPQPRPGAPRPGTPRPGMSPNNMPPRPAGPRPGAPAGRPGGPRPGPGGRGPGGGGGRPGGPGGGGGGNYRGGGAGGGGGAGGAAAGGFRGRPGGGGRPGQRGGAAGAFGRPGGAPKRGRKSKRAKRAEYENMQAPVVGGVRLPHGNGETIRLARGASLSDFAEKINANPASLVQALFNLGEMVTATQSVNDETLELLGSEMNYVVQVVSPEDEDRELLESFDLSYGEDAGDEGDLEIRPPVVTVMGHVDHGKTRLLDTIRQANVREGEAGGITQHIGAYQVLTELDGNERLITFIDTPGHEAFTAMRARGAKATDIAILVVAADDGVMPQTVEAINHAQAADVPVVVAVNKIDKEGADPQKIRGQLTEYGLIPEEYGGDTMFVDISAKQGTNIDALLEAVLLTADASLDLRANPDMEAQGVAIEAHLDRGRGPVATVLIQRGTLRVGDSIVAGDAYGRVRRMVDEHGEDVEAAMPSRPVQVIGFTSVPGAGDNLLVVDEDRIARQIADRRSARKRNALAARSRKRISLEDLDSALKETSQLNLILKGDNAGTVEALEEALLGIQVDDEVELRVIDRGVGGVTETNVNLASASDAIIIGFNVRAEGKATELANREGVEIRYYSVIYQAIDEIESALKGMLKPVYEEKELGRAEIRAIFRSSKVGNIAGCLVQSGIMRRNAKARLLRDNVVVAENLTVSSLRREKEDVTEVRDGYECGLTLTYSDIKEGDVIETYELVEKART</sequence>
<feature type="chain" id="PRO_1000008281" description="Translation initiation factor IF-2">
    <location>
        <begin position="1"/>
        <end position="920"/>
    </location>
</feature>
<feature type="domain" description="tr-type G">
    <location>
        <begin position="416"/>
        <end position="588"/>
    </location>
</feature>
<feature type="region of interest" description="Disordered" evidence="3">
    <location>
        <begin position="33"/>
        <end position="305"/>
    </location>
</feature>
<feature type="region of interest" description="G1" evidence="1">
    <location>
        <begin position="425"/>
        <end position="432"/>
    </location>
</feature>
<feature type="region of interest" description="G2" evidence="1">
    <location>
        <begin position="450"/>
        <end position="454"/>
    </location>
</feature>
<feature type="region of interest" description="G3" evidence="1">
    <location>
        <begin position="475"/>
        <end position="478"/>
    </location>
</feature>
<feature type="region of interest" description="G4" evidence="1">
    <location>
        <begin position="529"/>
        <end position="532"/>
    </location>
</feature>
<feature type="region of interest" description="G5" evidence="1">
    <location>
        <begin position="565"/>
        <end position="567"/>
    </location>
</feature>
<feature type="compositionally biased region" description="Low complexity" evidence="3">
    <location>
        <begin position="53"/>
        <end position="86"/>
    </location>
</feature>
<feature type="compositionally biased region" description="Pro residues" evidence="3">
    <location>
        <begin position="87"/>
        <end position="159"/>
    </location>
</feature>
<feature type="compositionally biased region" description="Pro residues" evidence="3">
    <location>
        <begin position="179"/>
        <end position="193"/>
    </location>
</feature>
<feature type="compositionally biased region" description="Pro residues" evidence="3">
    <location>
        <begin position="201"/>
        <end position="212"/>
    </location>
</feature>
<feature type="compositionally biased region" description="Gly residues" evidence="3">
    <location>
        <begin position="225"/>
        <end position="291"/>
    </location>
</feature>
<feature type="compositionally biased region" description="Basic residues" evidence="3">
    <location>
        <begin position="295"/>
        <end position="304"/>
    </location>
</feature>
<feature type="binding site" evidence="2">
    <location>
        <begin position="425"/>
        <end position="432"/>
    </location>
    <ligand>
        <name>GTP</name>
        <dbReference type="ChEBI" id="CHEBI:37565"/>
    </ligand>
</feature>
<feature type="binding site" evidence="2">
    <location>
        <begin position="475"/>
        <end position="479"/>
    </location>
    <ligand>
        <name>GTP</name>
        <dbReference type="ChEBI" id="CHEBI:37565"/>
    </ligand>
</feature>
<feature type="binding site" evidence="2">
    <location>
        <begin position="529"/>
        <end position="532"/>
    </location>
    <ligand>
        <name>GTP</name>
        <dbReference type="ChEBI" id="CHEBI:37565"/>
    </ligand>
</feature>
<evidence type="ECO:0000250" key="1"/>
<evidence type="ECO:0000255" key="2">
    <source>
        <dbReference type="HAMAP-Rule" id="MF_00100"/>
    </source>
</evidence>
<evidence type="ECO:0000256" key="3">
    <source>
        <dbReference type="SAM" id="MobiDB-lite"/>
    </source>
</evidence>
<proteinExistence type="inferred from homology"/>
<organism>
    <name type="scientific">Mycobacterium sp. (strain JLS)</name>
    <dbReference type="NCBI Taxonomy" id="164757"/>
    <lineage>
        <taxon>Bacteria</taxon>
        <taxon>Bacillati</taxon>
        <taxon>Actinomycetota</taxon>
        <taxon>Actinomycetes</taxon>
        <taxon>Mycobacteriales</taxon>
        <taxon>Mycobacteriaceae</taxon>
        <taxon>Mycobacterium</taxon>
    </lineage>
</organism>
<dbReference type="EMBL" id="CP000580">
    <property type="protein sequence ID" value="ABN97852.1"/>
    <property type="molecule type" value="Genomic_DNA"/>
</dbReference>
<dbReference type="SMR" id="A3PY75"/>
<dbReference type="KEGG" id="mjl:Mjls_2065"/>
<dbReference type="HOGENOM" id="CLU_006301_9_2_11"/>
<dbReference type="GO" id="GO:0005829">
    <property type="term" value="C:cytosol"/>
    <property type="evidence" value="ECO:0007669"/>
    <property type="project" value="TreeGrafter"/>
</dbReference>
<dbReference type="GO" id="GO:0005525">
    <property type="term" value="F:GTP binding"/>
    <property type="evidence" value="ECO:0007669"/>
    <property type="project" value="UniProtKB-KW"/>
</dbReference>
<dbReference type="GO" id="GO:0003924">
    <property type="term" value="F:GTPase activity"/>
    <property type="evidence" value="ECO:0007669"/>
    <property type="project" value="UniProtKB-UniRule"/>
</dbReference>
<dbReference type="GO" id="GO:0003743">
    <property type="term" value="F:translation initiation factor activity"/>
    <property type="evidence" value="ECO:0007669"/>
    <property type="project" value="UniProtKB-UniRule"/>
</dbReference>
<dbReference type="CDD" id="cd01887">
    <property type="entry name" value="IF2_eIF5B"/>
    <property type="match status" value="1"/>
</dbReference>
<dbReference type="CDD" id="cd03702">
    <property type="entry name" value="IF2_mtIF2_II"/>
    <property type="match status" value="1"/>
</dbReference>
<dbReference type="CDD" id="cd03692">
    <property type="entry name" value="mtIF2_IVc"/>
    <property type="match status" value="1"/>
</dbReference>
<dbReference type="FunFam" id="1.10.10.2480:FF:000003">
    <property type="entry name" value="Translation initiation factor IF-2"/>
    <property type="match status" value="1"/>
</dbReference>
<dbReference type="FunFam" id="2.40.30.10:FF:000007">
    <property type="entry name" value="Translation initiation factor IF-2"/>
    <property type="match status" value="1"/>
</dbReference>
<dbReference type="FunFam" id="2.40.30.10:FF:000008">
    <property type="entry name" value="Translation initiation factor IF-2"/>
    <property type="match status" value="1"/>
</dbReference>
<dbReference type="FunFam" id="3.40.50.10050:FF:000001">
    <property type="entry name" value="Translation initiation factor IF-2"/>
    <property type="match status" value="1"/>
</dbReference>
<dbReference type="FunFam" id="3.40.50.300:FF:000019">
    <property type="entry name" value="Translation initiation factor IF-2"/>
    <property type="match status" value="1"/>
</dbReference>
<dbReference type="Gene3D" id="1.10.10.2480">
    <property type="match status" value="1"/>
</dbReference>
<dbReference type="Gene3D" id="3.40.50.300">
    <property type="entry name" value="P-loop containing nucleotide triphosphate hydrolases"/>
    <property type="match status" value="1"/>
</dbReference>
<dbReference type="Gene3D" id="2.40.30.10">
    <property type="entry name" value="Translation factors"/>
    <property type="match status" value="2"/>
</dbReference>
<dbReference type="Gene3D" id="3.40.50.10050">
    <property type="entry name" value="Translation initiation factor IF- 2, domain 3"/>
    <property type="match status" value="1"/>
</dbReference>
<dbReference type="HAMAP" id="MF_00100_B">
    <property type="entry name" value="IF_2_B"/>
    <property type="match status" value="1"/>
</dbReference>
<dbReference type="InterPro" id="IPR053905">
    <property type="entry name" value="EF-G-like_DII"/>
</dbReference>
<dbReference type="InterPro" id="IPR044145">
    <property type="entry name" value="IF2_II"/>
</dbReference>
<dbReference type="InterPro" id="IPR006847">
    <property type="entry name" value="IF2_N"/>
</dbReference>
<dbReference type="InterPro" id="IPR027417">
    <property type="entry name" value="P-loop_NTPase"/>
</dbReference>
<dbReference type="InterPro" id="IPR005225">
    <property type="entry name" value="Small_GTP-bd"/>
</dbReference>
<dbReference type="InterPro" id="IPR000795">
    <property type="entry name" value="T_Tr_GTP-bd_dom"/>
</dbReference>
<dbReference type="InterPro" id="IPR000178">
    <property type="entry name" value="TF_IF2_bacterial-like"/>
</dbReference>
<dbReference type="InterPro" id="IPR015760">
    <property type="entry name" value="TIF_IF2"/>
</dbReference>
<dbReference type="InterPro" id="IPR023115">
    <property type="entry name" value="TIF_IF2_dom3"/>
</dbReference>
<dbReference type="InterPro" id="IPR036925">
    <property type="entry name" value="TIF_IF2_dom3_sf"/>
</dbReference>
<dbReference type="InterPro" id="IPR009000">
    <property type="entry name" value="Transl_B-barrel_sf"/>
</dbReference>
<dbReference type="NCBIfam" id="TIGR00487">
    <property type="entry name" value="IF-2"/>
    <property type="match status" value="1"/>
</dbReference>
<dbReference type="NCBIfam" id="TIGR00231">
    <property type="entry name" value="small_GTP"/>
    <property type="match status" value="1"/>
</dbReference>
<dbReference type="PANTHER" id="PTHR43381:SF5">
    <property type="entry name" value="TR-TYPE G DOMAIN-CONTAINING PROTEIN"/>
    <property type="match status" value="1"/>
</dbReference>
<dbReference type="PANTHER" id="PTHR43381">
    <property type="entry name" value="TRANSLATION INITIATION FACTOR IF-2-RELATED"/>
    <property type="match status" value="1"/>
</dbReference>
<dbReference type="Pfam" id="PF22042">
    <property type="entry name" value="EF-G_D2"/>
    <property type="match status" value="1"/>
</dbReference>
<dbReference type="Pfam" id="PF00009">
    <property type="entry name" value="GTP_EFTU"/>
    <property type="match status" value="1"/>
</dbReference>
<dbReference type="Pfam" id="PF11987">
    <property type="entry name" value="IF-2"/>
    <property type="match status" value="1"/>
</dbReference>
<dbReference type="Pfam" id="PF04760">
    <property type="entry name" value="IF2_N"/>
    <property type="match status" value="2"/>
</dbReference>
<dbReference type="PRINTS" id="PR01217">
    <property type="entry name" value="PRICHEXTENSN"/>
</dbReference>
<dbReference type="SUPFAM" id="SSF52156">
    <property type="entry name" value="Initiation factor IF2/eIF5b, domain 3"/>
    <property type="match status" value="1"/>
</dbReference>
<dbReference type="SUPFAM" id="SSF52540">
    <property type="entry name" value="P-loop containing nucleoside triphosphate hydrolases"/>
    <property type="match status" value="1"/>
</dbReference>
<dbReference type="SUPFAM" id="SSF50447">
    <property type="entry name" value="Translation proteins"/>
    <property type="match status" value="2"/>
</dbReference>
<dbReference type="PROSITE" id="PS51722">
    <property type="entry name" value="G_TR_2"/>
    <property type="match status" value="1"/>
</dbReference>
<dbReference type="PROSITE" id="PS01176">
    <property type="entry name" value="IF2"/>
    <property type="match status" value="1"/>
</dbReference>
<gene>
    <name evidence="2" type="primary">infB</name>
    <name type="ordered locus">Mjls_2065</name>
</gene>
<accession>A3PY75</accession>
<reference key="1">
    <citation type="submission" date="2007-02" db="EMBL/GenBank/DDBJ databases">
        <title>Complete sequence of Mycobacterium sp. JLS.</title>
        <authorList>
            <consortium name="US DOE Joint Genome Institute"/>
            <person name="Copeland A."/>
            <person name="Lucas S."/>
            <person name="Lapidus A."/>
            <person name="Barry K."/>
            <person name="Detter J.C."/>
            <person name="Glavina del Rio T."/>
            <person name="Hammon N."/>
            <person name="Israni S."/>
            <person name="Dalin E."/>
            <person name="Tice H."/>
            <person name="Pitluck S."/>
            <person name="Chain P."/>
            <person name="Malfatti S."/>
            <person name="Shin M."/>
            <person name="Vergez L."/>
            <person name="Schmutz J."/>
            <person name="Larimer F."/>
            <person name="Land M."/>
            <person name="Hauser L."/>
            <person name="Kyrpides N."/>
            <person name="Mikhailova N."/>
            <person name="Miller C.D."/>
            <person name="Anderson A.J."/>
            <person name="Sims R.C."/>
            <person name="Richardson P."/>
        </authorList>
    </citation>
    <scope>NUCLEOTIDE SEQUENCE [LARGE SCALE GENOMIC DNA]</scope>
    <source>
        <strain>JLS</strain>
    </source>
</reference>
<protein>
    <recommendedName>
        <fullName evidence="2">Translation initiation factor IF-2</fullName>
    </recommendedName>
</protein>